<name>AMZ2_PONAB</name>
<protein>
    <recommendedName>
        <fullName>Archaemetzincin-2</fullName>
        <ecNumber evidence="1">3.4.-.-</ecNumber>
    </recommendedName>
    <alternativeName>
        <fullName>Archeobacterial metalloproteinase-like protein 2</fullName>
    </alternativeName>
</protein>
<gene>
    <name type="primary">AMZ2</name>
</gene>
<comment type="function">
    <text evidence="1">Probable zinc metalloprotease.</text>
</comment>
<comment type="cofactor">
    <cofactor evidence="1">
        <name>Zn(2+)</name>
        <dbReference type="ChEBI" id="CHEBI:29105"/>
    </cofactor>
    <text evidence="1">Binds 2 Zn(2+) ions per subunit. One is catalytic, whereas the other seems to have a structural role.</text>
</comment>
<comment type="similarity">
    <text evidence="3">Belongs to the peptidase M54 family.</text>
</comment>
<organism>
    <name type="scientific">Pongo abelii</name>
    <name type="common">Sumatran orangutan</name>
    <name type="synonym">Pongo pygmaeus abelii</name>
    <dbReference type="NCBI Taxonomy" id="9601"/>
    <lineage>
        <taxon>Eukaryota</taxon>
        <taxon>Metazoa</taxon>
        <taxon>Chordata</taxon>
        <taxon>Craniata</taxon>
        <taxon>Vertebrata</taxon>
        <taxon>Euteleostomi</taxon>
        <taxon>Mammalia</taxon>
        <taxon>Eutheria</taxon>
        <taxon>Euarchontoglires</taxon>
        <taxon>Primates</taxon>
        <taxon>Haplorrhini</taxon>
        <taxon>Catarrhini</taxon>
        <taxon>Hominidae</taxon>
        <taxon>Pongo</taxon>
    </lineage>
</organism>
<reference key="1">
    <citation type="submission" date="2004-11" db="EMBL/GenBank/DDBJ databases">
        <authorList>
            <consortium name="The German cDNA consortium"/>
        </authorList>
    </citation>
    <scope>NUCLEOTIDE SEQUENCE [LARGE SCALE MRNA]</scope>
    <source>
        <tissue>Brain cortex</tissue>
    </source>
</reference>
<accession>Q5R4A6</accession>
<proteinExistence type="evidence at transcript level"/>
<feature type="chain" id="PRO_0000159620" description="Archaemetzincin-2">
    <location>
        <begin position="1"/>
        <end position="360"/>
    </location>
</feature>
<feature type="active site" description="Proton acceptor" evidence="2">
    <location>
        <position position="255"/>
    </location>
</feature>
<feature type="binding site" evidence="1">
    <location>
        <position position="254"/>
    </location>
    <ligand>
        <name>Zn(2+)</name>
        <dbReference type="ChEBI" id="CHEBI:29105"/>
        <label>1</label>
        <note>catalytic</note>
    </ligand>
</feature>
<feature type="binding site" evidence="1">
    <location>
        <position position="258"/>
    </location>
    <ligand>
        <name>Zn(2+)</name>
        <dbReference type="ChEBI" id="CHEBI:29105"/>
        <label>1</label>
        <note>catalytic</note>
    </ligand>
</feature>
<feature type="binding site" evidence="1">
    <location>
        <position position="264"/>
    </location>
    <ligand>
        <name>Zn(2+)</name>
        <dbReference type="ChEBI" id="CHEBI:29105"/>
        <label>1</label>
        <note>catalytic</note>
    </ligand>
</feature>
<feature type="binding site" evidence="1">
    <location>
        <position position="265"/>
    </location>
    <ligand>
        <name>Zn(2+)</name>
        <dbReference type="ChEBI" id="CHEBI:29105"/>
        <label>2</label>
    </ligand>
</feature>
<feature type="binding site" evidence="1">
    <location>
        <position position="270"/>
    </location>
    <ligand>
        <name>Zn(2+)</name>
        <dbReference type="ChEBI" id="CHEBI:29105"/>
        <label>2</label>
    </ligand>
</feature>
<feature type="binding site" evidence="1">
    <location>
        <position position="289"/>
    </location>
    <ligand>
        <name>Zn(2+)</name>
        <dbReference type="ChEBI" id="CHEBI:29105"/>
        <label>2</label>
    </ligand>
</feature>
<feature type="binding site" evidence="1">
    <location>
        <position position="292"/>
    </location>
    <ligand>
        <name>Zn(2+)</name>
        <dbReference type="ChEBI" id="CHEBI:29105"/>
        <label>2</label>
    </ligand>
</feature>
<keyword id="KW-0378">Hydrolase</keyword>
<keyword id="KW-0479">Metal-binding</keyword>
<keyword id="KW-0482">Metalloprotease</keyword>
<keyword id="KW-0645">Protease</keyword>
<keyword id="KW-1185">Reference proteome</keyword>
<keyword id="KW-0862">Zinc</keyword>
<dbReference type="EC" id="3.4.-.-" evidence="1"/>
<dbReference type="EMBL" id="CR861349">
    <property type="protein sequence ID" value="CAH93410.1"/>
    <property type="molecule type" value="mRNA"/>
</dbReference>
<dbReference type="RefSeq" id="NP_001127001.1">
    <property type="nucleotide sequence ID" value="NM_001133529.1"/>
</dbReference>
<dbReference type="SMR" id="Q5R4A6"/>
<dbReference type="FunCoup" id="Q5R4A6">
    <property type="interactions" value="266"/>
</dbReference>
<dbReference type="MEROPS" id="M54.002"/>
<dbReference type="GeneID" id="100174024"/>
<dbReference type="KEGG" id="pon:100174024"/>
<dbReference type="CTD" id="51321"/>
<dbReference type="InParanoid" id="Q5R4A6"/>
<dbReference type="OrthoDB" id="2365600at2759"/>
<dbReference type="Proteomes" id="UP000001595">
    <property type="component" value="Unplaced"/>
</dbReference>
<dbReference type="GO" id="GO:0046872">
    <property type="term" value="F:metal ion binding"/>
    <property type="evidence" value="ECO:0007669"/>
    <property type="project" value="UniProtKB-KW"/>
</dbReference>
<dbReference type="GO" id="GO:0008237">
    <property type="term" value="F:metallopeptidase activity"/>
    <property type="evidence" value="ECO:0007669"/>
    <property type="project" value="UniProtKB-KW"/>
</dbReference>
<dbReference type="GO" id="GO:0006508">
    <property type="term" value="P:proteolysis"/>
    <property type="evidence" value="ECO:0007669"/>
    <property type="project" value="UniProtKB-KW"/>
</dbReference>
<dbReference type="CDD" id="cd11375">
    <property type="entry name" value="Peptidase_M54"/>
    <property type="match status" value="1"/>
</dbReference>
<dbReference type="Gene3D" id="3.40.390.10">
    <property type="entry name" value="Collagenase (Catalytic Domain)"/>
    <property type="match status" value="1"/>
</dbReference>
<dbReference type="InterPro" id="IPR052009">
    <property type="entry name" value="Archaemetzincin"/>
</dbReference>
<dbReference type="InterPro" id="IPR024079">
    <property type="entry name" value="MetalloPept_cat_dom_sf"/>
</dbReference>
<dbReference type="InterPro" id="IPR012962">
    <property type="entry name" value="Pept_M54_archaemetzincn"/>
</dbReference>
<dbReference type="PANTHER" id="PTHR32205:SF5">
    <property type="entry name" value="ARCHAEMETZINCIN-2"/>
    <property type="match status" value="1"/>
</dbReference>
<dbReference type="PANTHER" id="PTHR32205">
    <property type="entry name" value="ARCHAEMETZINCIN-2-RELATED"/>
    <property type="match status" value="1"/>
</dbReference>
<dbReference type="Pfam" id="PF07998">
    <property type="entry name" value="Peptidase_M54"/>
    <property type="match status" value="1"/>
</dbReference>
<dbReference type="SUPFAM" id="SSF55486">
    <property type="entry name" value="Metalloproteases ('zincins'), catalytic domain"/>
    <property type="match status" value="1"/>
</dbReference>
<dbReference type="PROSITE" id="PS00142">
    <property type="entry name" value="ZINC_PROTEASE"/>
    <property type="match status" value="1"/>
</dbReference>
<evidence type="ECO:0000250" key="1">
    <source>
        <dbReference type="UniProtKB" id="Q8TXW1"/>
    </source>
</evidence>
<evidence type="ECO:0000255" key="2">
    <source>
        <dbReference type="PROSITE-ProRule" id="PRU10095"/>
    </source>
</evidence>
<evidence type="ECO:0000305" key="3"/>
<sequence>MQIIRHSEQTLKTALISKNPVLVSQYEKLDAGEQRLMNEAFQPASDLFGPITLHSPSDWITSHPEAPQDFEQFFSDPYRKTPSPNKRSIYIQSIGSLGNTRIISEEYIKWVTGYCKAYFYGLRVKLLEPVPVSATRCSFRVNENTHNLQIHAGDILKFLKKKKPEDAFCVVGITMIDLYPRDSWNFVFGQASLTDGVGIFSFARYGSDFYSMRYEGKVKKLKKTSSSDYSIFDNYYIPEITSVLLLRSCKTLTHEIGHIFGLRHCQWLACLMQGSNHLEEADRRPLNLCPICLRKLQCAIGFSTVERYKALVRWIDDESSDTPGATPEHSCEDNGNLPKPVEAFKEWKEWIIKCLAVLQK</sequence>